<gene>
    <name evidence="1" type="primary">groEL</name>
    <name evidence="1" type="synonym">groL</name>
    <name type="ordered locus">CbuK_0291</name>
</gene>
<keyword id="KW-0067">ATP-binding</keyword>
<keyword id="KW-0143">Chaperone</keyword>
<keyword id="KW-0963">Cytoplasm</keyword>
<keyword id="KW-0413">Isomerase</keyword>
<keyword id="KW-0547">Nucleotide-binding</keyword>
<sequence length="552" mass="58284">MAAKVLKFSHEVLHAMSRGVEVLANAVKVTLGPKGRNVVLDKSFGAPTITKDGVSVAKEIELEDKFENMGAQMVKEVASRTSDDAGDGTTTATVLAQAILVEGIKAVIAGMNPMDLKRGIDKAVTAAVAELKKISKPCKDQKAIAQVGTISANSDKSIGDIIAEAMEKVGKEGVITVEDGSGLENALEVVEGMQFDRGYLSPYFINNQQNMSAELENPFILLVDKKISNIRELIPLLENVAKSGRPLLVIAEDIEGEALATLVVNNIRGVVKVAAVKAPGFGDRRKAMLQDIAVLTGGKVISEEVGLSLEAASLDDLGSAKRVVVTKDDTTIIDGSGDAGDIKNRVEQIRKEIENSSSDYDKEKLQERLAKLAGGVAVIKVGAATEVEMKEKKARVEDALHATRAAVEEGVVPGGGVALIRVLKSLDSVEVENEDQRVGVEIARRAMAYPLSQIVKNTGVQAAVVADKVLNHKDVNYGYNAATGEYGDMIEMGILDPTKVTRTALQNAASIAGLMITTECMVTEAPKKKEESMPGGGDMGGMGGMGGMGGMM</sequence>
<protein>
    <recommendedName>
        <fullName evidence="1">Chaperonin GroEL</fullName>
        <ecNumber evidence="1">5.6.1.7</ecNumber>
    </recommendedName>
    <alternativeName>
        <fullName evidence="1">60 kDa chaperonin</fullName>
    </alternativeName>
    <alternativeName>
        <fullName evidence="1">Chaperonin-60</fullName>
        <shortName evidence="1">Cpn60</shortName>
    </alternativeName>
</protein>
<accession>B6J4T4</accession>
<dbReference type="EC" id="5.6.1.7" evidence="1"/>
<dbReference type="EMBL" id="CP001020">
    <property type="protein sequence ID" value="ACJ19599.1"/>
    <property type="molecule type" value="Genomic_DNA"/>
</dbReference>
<dbReference type="RefSeq" id="WP_005770500.1">
    <property type="nucleotide sequence ID" value="NC_011528.1"/>
</dbReference>
<dbReference type="SMR" id="B6J4T4"/>
<dbReference type="KEGG" id="cbc:CbuK_0291"/>
<dbReference type="HOGENOM" id="CLU_016503_3_0_6"/>
<dbReference type="GO" id="GO:0005737">
    <property type="term" value="C:cytoplasm"/>
    <property type="evidence" value="ECO:0007669"/>
    <property type="project" value="UniProtKB-SubCell"/>
</dbReference>
<dbReference type="GO" id="GO:0005524">
    <property type="term" value="F:ATP binding"/>
    <property type="evidence" value="ECO:0007669"/>
    <property type="project" value="UniProtKB-UniRule"/>
</dbReference>
<dbReference type="GO" id="GO:0140662">
    <property type="term" value="F:ATP-dependent protein folding chaperone"/>
    <property type="evidence" value="ECO:0007669"/>
    <property type="project" value="InterPro"/>
</dbReference>
<dbReference type="GO" id="GO:0016853">
    <property type="term" value="F:isomerase activity"/>
    <property type="evidence" value="ECO:0007669"/>
    <property type="project" value="UniProtKB-KW"/>
</dbReference>
<dbReference type="GO" id="GO:0051082">
    <property type="term" value="F:unfolded protein binding"/>
    <property type="evidence" value="ECO:0007669"/>
    <property type="project" value="UniProtKB-UniRule"/>
</dbReference>
<dbReference type="GO" id="GO:0042026">
    <property type="term" value="P:protein refolding"/>
    <property type="evidence" value="ECO:0007669"/>
    <property type="project" value="UniProtKB-UniRule"/>
</dbReference>
<dbReference type="CDD" id="cd03344">
    <property type="entry name" value="GroEL"/>
    <property type="match status" value="1"/>
</dbReference>
<dbReference type="FunFam" id="1.10.560.10:FF:000001">
    <property type="entry name" value="60 kDa chaperonin"/>
    <property type="match status" value="1"/>
</dbReference>
<dbReference type="FunFam" id="3.50.7.10:FF:000001">
    <property type="entry name" value="60 kDa chaperonin"/>
    <property type="match status" value="1"/>
</dbReference>
<dbReference type="Gene3D" id="3.50.7.10">
    <property type="entry name" value="GroEL"/>
    <property type="match status" value="1"/>
</dbReference>
<dbReference type="Gene3D" id="1.10.560.10">
    <property type="entry name" value="GroEL-like equatorial domain"/>
    <property type="match status" value="1"/>
</dbReference>
<dbReference type="Gene3D" id="3.30.260.10">
    <property type="entry name" value="TCP-1-like chaperonin intermediate domain"/>
    <property type="match status" value="1"/>
</dbReference>
<dbReference type="HAMAP" id="MF_00600">
    <property type="entry name" value="CH60"/>
    <property type="match status" value="1"/>
</dbReference>
<dbReference type="InterPro" id="IPR018370">
    <property type="entry name" value="Chaperonin_Cpn60_CS"/>
</dbReference>
<dbReference type="InterPro" id="IPR001844">
    <property type="entry name" value="Cpn60/GroEL"/>
</dbReference>
<dbReference type="InterPro" id="IPR002423">
    <property type="entry name" value="Cpn60/GroEL/TCP-1"/>
</dbReference>
<dbReference type="InterPro" id="IPR027409">
    <property type="entry name" value="GroEL-like_apical_dom_sf"/>
</dbReference>
<dbReference type="InterPro" id="IPR027413">
    <property type="entry name" value="GROEL-like_equatorial_sf"/>
</dbReference>
<dbReference type="InterPro" id="IPR027410">
    <property type="entry name" value="TCP-1-like_intermed_sf"/>
</dbReference>
<dbReference type="NCBIfam" id="TIGR02348">
    <property type="entry name" value="GroEL"/>
    <property type="match status" value="1"/>
</dbReference>
<dbReference type="NCBIfam" id="NF000592">
    <property type="entry name" value="PRK00013.1"/>
    <property type="match status" value="1"/>
</dbReference>
<dbReference type="NCBIfam" id="NF009487">
    <property type="entry name" value="PRK12849.1"/>
    <property type="match status" value="1"/>
</dbReference>
<dbReference type="NCBIfam" id="NF009488">
    <property type="entry name" value="PRK12850.1"/>
    <property type="match status" value="1"/>
</dbReference>
<dbReference type="NCBIfam" id="NF009489">
    <property type="entry name" value="PRK12851.1"/>
    <property type="match status" value="1"/>
</dbReference>
<dbReference type="PANTHER" id="PTHR45633">
    <property type="entry name" value="60 KDA HEAT SHOCK PROTEIN, MITOCHONDRIAL"/>
    <property type="match status" value="1"/>
</dbReference>
<dbReference type="Pfam" id="PF00118">
    <property type="entry name" value="Cpn60_TCP1"/>
    <property type="match status" value="1"/>
</dbReference>
<dbReference type="PRINTS" id="PR00298">
    <property type="entry name" value="CHAPERONIN60"/>
</dbReference>
<dbReference type="SUPFAM" id="SSF52029">
    <property type="entry name" value="GroEL apical domain-like"/>
    <property type="match status" value="1"/>
</dbReference>
<dbReference type="SUPFAM" id="SSF48592">
    <property type="entry name" value="GroEL equatorial domain-like"/>
    <property type="match status" value="1"/>
</dbReference>
<dbReference type="SUPFAM" id="SSF54849">
    <property type="entry name" value="GroEL-intermediate domain like"/>
    <property type="match status" value="1"/>
</dbReference>
<dbReference type="PROSITE" id="PS00296">
    <property type="entry name" value="CHAPERONINS_CPN60"/>
    <property type="match status" value="1"/>
</dbReference>
<feature type="chain" id="PRO_1000129997" description="Chaperonin GroEL">
    <location>
        <begin position="1"/>
        <end position="552"/>
    </location>
</feature>
<feature type="binding site" evidence="1">
    <location>
        <begin position="30"/>
        <end position="33"/>
    </location>
    <ligand>
        <name>ATP</name>
        <dbReference type="ChEBI" id="CHEBI:30616"/>
    </ligand>
</feature>
<feature type="binding site" evidence="1">
    <location>
        <position position="51"/>
    </location>
    <ligand>
        <name>ATP</name>
        <dbReference type="ChEBI" id="CHEBI:30616"/>
    </ligand>
</feature>
<feature type="binding site" evidence="1">
    <location>
        <begin position="87"/>
        <end position="91"/>
    </location>
    <ligand>
        <name>ATP</name>
        <dbReference type="ChEBI" id="CHEBI:30616"/>
    </ligand>
</feature>
<feature type="binding site" evidence="1">
    <location>
        <position position="415"/>
    </location>
    <ligand>
        <name>ATP</name>
        <dbReference type="ChEBI" id="CHEBI:30616"/>
    </ligand>
</feature>
<feature type="binding site" evidence="1">
    <location>
        <begin position="480"/>
        <end position="482"/>
    </location>
    <ligand>
        <name>ATP</name>
        <dbReference type="ChEBI" id="CHEBI:30616"/>
    </ligand>
</feature>
<feature type="binding site" evidence="1">
    <location>
        <position position="496"/>
    </location>
    <ligand>
        <name>ATP</name>
        <dbReference type="ChEBI" id="CHEBI:30616"/>
    </ligand>
</feature>
<organism>
    <name type="scientific">Coxiella burnetii (strain CbuK_Q154)</name>
    <name type="common">Coxiella burnetii (strain Q154)</name>
    <dbReference type="NCBI Taxonomy" id="434924"/>
    <lineage>
        <taxon>Bacteria</taxon>
        <taxon>Pseudomonadati</taxon>
        <taxon>Pseudomonadota</taxon>
        <taxon>Gammaproteobacteria</taxon>
        <taxon>Legionellales</taxon>
        <taxon>Coxiellaceae</taxon>
        <taxon>Coxiella</taxon>
    </lineage>
</organism>
<reference key="1">
    <citation type="journal article" date="2009" name="Infect. Immun.">
        <title>Comparative genomics reveal extensive transposon-mediated genomic plasticity and diversity among potential effector proteins within the genus Coxiella.</title>
        <authorList>
            <person name="Beare P.A."/>
            <person name="Unsworth N."/>
            <person name="Andoh M."/>
            <person name="Voth D.E."/>
            <person name="Omsland A."/>
            <person name="Gilk S.D."/>
            <person name="Williams K.P."/>
            <person name="Sobral B.W."/>
            <person name="Kupko J.J. III"/>
            <person name="Porcella S.F."/>
            <person name="Samuel J.E."/>
            <person name="Heinzen R.A."/>
        </authorList>
    </citation>
    <scope>NUCLEOTIDE SEQUENCE [LARGE SCALE GENOMIC DNA]</scope>
    <source>
        <strain>CbuK_Q154</strain>
    </source>
</reference>
<name>CH60_COXB1</name>
<evidence type="ECO:0000255" key="1">
    <source>
        <dbReference type="HAMAP-Rule" id="MF_00600"/>
    </source>
</evidence>
<comment type="function">
    <text evidence="1">Together with its co-chaperonin GroES, plays an essential role in assisting protein folding. The GroEL-GroES system forms a nano-cage that allows encapsulation of the non-native substrate proteins and provides a physical environment optimized to promote and accelerate protein folding.</text>
</comment>
<comment type="catalytic activity">
    <reaction evidence="1">
        <text>ATP + H2O + a folded polypeptide = ADP + phosphate + an unfolded polypeptide.</text>
        <dbReference type="EC" id="5.6.1.7"/>
    </reaction>
</comment>
<comment type="subunit">
    <text evidence="1">Forms a cylinder of 14 subunits composed of two heptameric rings stacked back-to-back. Interacts with the co-chaperonin GroES.</text>
</comment>
<comment type="subcellular location">
    <subcellularLocation>
        <location evidence="1">Cytoplasm</location>
    </subcellularLocation>
</comment>
<comment type="similarity">
    <text evidence="1">Belongs to the chaperonin (HSP60) family.</text>
</comment>
<proteinExistence type="inferred from homology"/>